<protein>
    <recommendedName>
        <fullName evidence="2">Aspartate-semialdehyde dehydrogenase</fullName>
        <shortName evidence="2">ASA dehydrogenase</shortName>
        <shortName evidence="2">ASADH</shortName>
        <ecNumber evidence="2">1.2.1.11</ecNumber>
    </recommendedName>
    <alternativeName>
        <fullName evidence="2">Aspartate-beta-semialdehyde dehydrogenase</fullName>
    </alternativeName>
</protein>
<comment type="function">
    <text evidence="2">Catalyzes the NADPH-dependent formation of L-aspartate-semialdehyde (L-ASA) by the reductive dephosphorylation of L-aspartyl-4-phosphate.</text>
</comment>
<comment type="catalytic activity">
    <reaction evidence="2">
        <text>L-aspartate 4-semialdehyde + phosphate + NADP(+) = 4-phospho-L-aspartate + NADPH + H(+)</text>
        <dbReference type="Rhea" id="RHEA:24284"/>
        <dbReference type="ChEBI" id="CHEBI:15378"/>
        <dbReference type="ChEBI" id="CHEBI:43474"/>
        <dbReference type="ChEBI" id="CHEBI:57535"/>
        <dbReference type="ChEBI" id="CHEBI:57783"/>
        <dbReference type="ChEBI" id="CHEBI:58349"/>
        <dbReference type="ChEBI" id="CHEBI:537519"/>
        <dbReference type="EC" id="1.2.1.11"/>
    </reaction>
</comment>
<comment type="pathway">
    <text evidence="2">Amino-acid biosynthesis; L-lysine biosynthesis via DAP pathway; (S)-tetrahydrodipicolinate from L-aspartate: step 2/4.</text>
</comment>
<comment type="pathway">
    <text evidence="2">Amino-acid biosynthesis; L-methionine biosynthesis via de novo pathway; L-homoserine from L-aspartate: step 2/3.</text>
</comment>
<comment type="pathway">
    <text evidence="2">Amino-acid biosynthesis; L-threonine biosynthesis; L-threonine from L-aspartate: step 2/5.</text>
</comment>
<comment type="subunit">
    <text evidence="2">Homodimer.</text>
</comment>
<comment type="similarity">
    <text evidence="2">Belongs to the aspartate-semialdehyde dehydrogenase family.</text>
</comment>
<comment type="sequence caution" evidence="3">
    <conflict type="erroneous initiation">
        <sequence resource="EMBL-CDS" id="AAN82658"/>
    </conflict>
</comment>
<accession>Q8FCR6</accession>
<feature type="chain" id="PRO_0000141371" description="Aspartate-semialdehyde dehydrogenase">
    <location>
        <begin position="1"/>
        <end position="367"/>
    </location>
</feature>
<feature type="active site" description="Acyl-thioester intermediate" evidence="2">
    <location>
        <position position="135"/>
    </location>
</feature>
<feature type="active site" description="Proton acceptor" evidence="2">
    <location>
        <position position="274"/>
    </location>
</feature>
<feature type="binding site" evidence="2">
    <location>
        <begin position="10"/>
        <end position="13"/>
    </location>
    <ligand>
        <name>NADP(+)</name>
        <dbReference type="ChEBI" id="CHEBI:58349"/>
    </ligand>
</feature>
<feature type="binding site" evidence="2">
    <location>
        <begin position="37"/>
        <end position="38"/>
    </location>
    <ligand>
        <name>NADP(+)</name>
        <dbReference type="ChEBI" id="CHEBI:58349"/>
    </ligand>
</feature>
<feature type="binding site" evidence="2">
    <location>
        <position position="73"/>
    </location>
    <ligand>
        <name>NADP(+)</name>
        <dbReference type="ChEBI" id="CHEBI:58349"/>
    </ligand>
</feature>
<feature type="binding site" evidence="2">
    <location>
        <position position="102"/>
    </location>
    <ligand>
        <name>phosphate</name>
        <dbReference type="ChEBI" id="CHEBI:43474"/>
    </ligand>
</feature>
<feature type="binding site" evidence="2">
    <location>
        <position position="162"/>
    </location>
    <ligand>
        <name>substrate</name>
    </ligand>
</feature>
<feature type="binding site" evidence="2">
    <location>
        <begin position="165"/>
        <end position="166"/>
    </location>
    <ligand>
        <name>NADP(+)</name>
        <dbReference type="ChEBI" id="CHEBI:58349"/>
    </ligand>
</feature>
<feature type="binding site" evidence="2">
    <location>
        <position position="193"/>
    </location>
    <ligand>
        <name>NADP(+)</name>
        <dbReference type="ChEBI" id="CHEBI:58349"/>
    </ligand>
</feature>
<feature type="binding site" evidence="2">
    <location>
        <position position="241"/>
    </location>
    <ligand>
        <name>substrate</name>
    </ligand>
</feature>
<feature type="binding site" evidence="2">
    <location>
        <position position="244"/>
    </location>
    <ligand>
        <name>phosphate</name>
        <dbReference type="ChEBI" id="CHEBI:43474"/>
    </ligand>
</feature>
<feature type="binding site" evidence="2">
    <location>
        <position position="267"/>
    </location>
    <ligand>
        <name>substrate</name>
    </ligand>
</feature>
<feature type="binding site" evidence="2">
    <location>
        <position position="350"/>
    </location>
    <ligand>
        <name>NADP(+)</name>
        <dbReference type="ChEBI" id="CHEBI:58349"/>
    </ligand>
</feature>
<feature type="modified residue" description="S-cysteinyl cysteine; in inhibited form" evidence="1">
    <location>
        <position position="135"/>
    </location>
</feature>
<evidence type="ECO:0000250" key="1"/>
<evidence type="ECO:0000255" key="2">
    <source>
        <dbReference type="HAMAP-Rule" id="MF_02121"/>
    </source>
</evidence>
<evidence type="ECO:0000305" key="3"/>
<sequence>MKNVGFIGWRGMVGSVLMQRMVEERDFDAIRPVFFSTSQLGQAAPSFGGTTGTLQDAFDLEALKALDIIVTCQGGDYTNEIYPKLRESGWQGYWIDAASSLRMKDDAIIILDPVNQDVITDGLNNGIRTFVGGNCTVSLMLMSLGGLFANDLVDWVSVATYQAASGGGARHMRELLTQMGHLYGHVADELANPSSAILDIERKVTTLTRSGELPVDNFGVPLAGSLIPWIDKQLDNGQSREEWKGQAETNKILNTSSVIPVDGLCVRVGALRCHSQAFTIKLKKDVSIPTVEELLAAHNPWAKVVPNDREITMRELTPAAVTGTLTTPVGRLRKLNMGPEFLSAFTVGDQLLWGAAEPLRRMLRQLA</sequence>
<gene>
    <name evidence="2" type="primary">asd</name>
    <name type="ordered locus">c4220</name>
</gene>
<dbReference type="EC" id="1.2.1.11" evidence="2"/>
<dbReference type="EMBL" id="AE014075">
    <property type="protein sequence ID" value="AAN82658.1"/>
    <property type="status" value="ALT_INIT"/>
    <property type="molecule type" value="Genomic_DNA"/>
</dbReference>
<dbReference type="RefSeq" id="WP_000799949.1">
    <property type="nucleotide sequence ID" value="NZ_CP051263.1"/>
</dbReference>
<dbReference type="SMR" id="Q8FCR6"/>
<dbReference type="STRING" id="199310.c4220"/>
<dbReference type="KEGG" id="ecc:c4220"/>
<dbReference type="eggNOG" id="COG0136">
    <property type="taxonomic scope" value="Bacteria"/>
</dbReference>
<dbReference type="HOGENOM" id="CLU_066397_0_0_6"/>
<dbReference type="UniPathway" id="UPA00034">
    <property type="reaction ID" value="UER00016"/>
</dbReference>
<dbReference type="UniPathway" id="UPA00050">
    <property type="reaction ID" value="UER00463"/>
</dbReference>
<dbReference type="UniPathway" id="UPA00051">
    <property type="reaction ID" value="UER00464"/>
</dbReference>
<dbReference type="Proteomes" id="UP000001410">
    <property type="component" value="Chromosome"/>
</dbReference>
<dbReference type="GO" id="GO:0004073">
    <property type="term" value="F:aspartate-semialdehyde dehydrogenase activity"/>
    <property type="evidence" value="ECO:0007669"/>
    <property type="project" value="UniProtKB-UniRule"/>
</dbReference>
<dbReference type="GO" id="GO:0051287">
    <property type="term" value="F:NAD binding"/>
    <property type="evidence" value="ECO:0007669"/>
    <property type="project" value="InterPro"/>
</dbReference>
<dbReference type="GO" id="GO:0050661">
    <property type="term" value="F:NADP binding"/>
    <property type="evidence" value="ECO:0007669"/>
    <property type="project" value="UniProtKB-UniRule"/>
</dbReference>
<dbReference type="GO" id="GO:0046983">
    <property type="term" value="F:protein dimerization activity"/>
    <property type="evidence" value="ECO:0007669"/>
    <property type="project" value="InterPro"/>
</dbReference>
<dbReference type="GO" id="GO:0071266">
    <property type="term" value="P:'de novo' L-methionine biosynthetic process"/>
    <property type="evidence" value="ECO:0007669"/>
    <property type="project" value="UniProtKB-UniRule"/>
</dbReference>
<dbReference type="GO" id="GO:0019877">
    <property type="term" value="P:diaminopimelate biosynthetic process"/>
    <property type="evidence" value="ECO:0007669"/>
    <property type="project" value="UniProtKB-UniRule"/>
</dbReference>
<dbReference type="GO" id="GO:0009097">
    <property type="term" value="P:isoleucine biosynthetic process"/>
    <property type="evidence" value="ECO:0007669"/>
    <property type="project" value="InterPro"/>
</dbReference>
<dbReference type="GO" id="GO:0009089">
    <property type="term" value="P:lysine biosynthetic process via diaminopimelate"/>
    <property type="evidence" value="ECO:0007669"/>
    <property type="project" value="UniProtKB-UniRule"/>
</dbReference>
<dbReference type="GO" id="GO:0009088">
    <property type="term" value="P:threonine biosynthetic process"/>
    <property type="evidence" value="ECO:0007669"/>
    <property type="project" value="UniProtKB-UniRule"/>
</dbReference>
<dbReference type="CDD" id="cd23938">
    <property type="entry name" value="ASADH_C_bac_like"/>
    <property type="match status" value="1"/>
</dbReference>
<dbReference type="CDD" id="cd02314">
    <property type="entry name" value="VcASADH1_like_N"/>
    <property type="match status" value="1"/>
</dbReference>
<dbReference type="FunFam" id="3.30.360.10:FF:000012">
    <property type="entry name" value="Aspartate-semialdehyde dehydrogenase"/>
    <property type="match status" value="1"/>
</dbReference>
<dbReference type="FunFam" id="3.40.50.720:FF:000152">
    <property type="entry name" value="Aspartate-semialdehyde dehydrogenase"/>
    <property type="match status" value="1"/>
</dbReference>
<dbReference type="Gene3D" id="3.30.360.10">
    <property type="entry name" value="Dihydrodipicolinate Reductase, domain 2"/>
    <property type="match status" value="1"/>
</dbReference>
<dbReference type="Gene3D" id="3.40.50.720">
    <property type="entry name" value="NAD(P)-binding Rossmann-like Domain"/>
    <property type="match status" value="1"/>
</dbReference>
<dbReference type="HAMAP" id="MF_02121">
    <property type="entry name" value="ASADH"/>
    <property type="match status" value="1"/>
</dbReference>
<dbReference type="InterPro" id="IPR000319">
    <property type="entry name" value="Asp-semialdehyde_DH_CS"/>
</dbReference>
<dbReference type="InterPro" id="IPR011534">
    <property type="entry name" value="Asp_ADH_gamma-type"/>
</dbReference>
<dbReference type="InterPro" id="IPR012080">
    <property type="entry name" value="Asp_semialdehyde_DH"/>
</dbReference>
<dbReference type="InterPro" id="IPR036291">
    <property type="entry name" value="NAD(P)-bd_dom_sf"/>
</dbReference>
<dbReference type="InterPro" id="IPR000534">
    <property type="entry name" value="Semialdehyde_DH_NAD-bd"/>
</dbReference>
<dbReference type="InterPro" id="IPR012280">
    <property type="entry name" value="Semialdhyde_DH_dimer_dom"/>
</dbReference>
<dbReference type="NCBIfam" id="TIGR01745">
    <property type="entry name" value="asd_gamma"/>
    <property type="match status" value="1"/>
</dbReference>
<dbReference type="NCBIfam" id="NF005144">
    <property type="entry name" value="PRK06598.1"/>
    <property type="match status" value="1"/>
</dbReference>
<dbReference type="PANTHER" id="PTHR46278:SF4">
    <property type="entry name" value="ASPARTATE-SEMIALDEHYDE DEHYDROGENASE"/>
    <property type="match status" value="1"/>
</dbReference>
<dbReference type="PANTHER" id="PTHR46278">
    <property type="entry name" value="DEHYDROGENASE, PUTATIVE-RELATED"/>
    <property type="match status" value="1"/>
</dbReference>
<dbReference type="Pfam" id="PF01118">
    <property type="entry name" value="Semialdhyde_dh"/>
    <property type="match status" value="1"/>
</dbReference>
<dbReference type="Pfam" id="PF02774">
    <property type="entry name" value="Semialdhyde_dhC"/>
    <property type="match status" value="1"/>
</dbReference>
<dbReference type="PIRSF" id="PIRSF000148">
    <property type="entry name" value="ASA_dh"/>
    <property type="match status" value="1"/>
</dbReference>
<dbReference type="SMART" id="SM00859">
    <property type="entry name" value="Semialdhyde_dh"/>
    <property type="match status" value="1"/>
</dbReference>
<dbReference type="SUPFAM" id="SSF55347">
    <property type="entry name" value="Glyceraldehyde-3-phosphate dehydrogenase-like, C-terminal domain"/>
    <property type="match status" value="1"/>
</dbReference>
<dbReference type="SUPFAM" id="SSF51735">
    <property type="entry name" value="NAD(P)-binding Rossmann-fold domains"/>
    <property type="match status" value="1"/>
</dbReference>
<dbReference type="PROSITE" id="PS01103">
    <property type="entry name" value="ASD"/>
    <property type="match status" value="1"/>
</dbReference>
<proteinExistence type="inferred from homology"/>
<reference key="1">
    <citation type="journal article" date="2002" name="Proc. Natl. Acad. Sci. U.S.A.">
        <title>Extensive mosaic structure revealed by the complete genome sequence of uropathogenic Escherichia coli.</title>
        <authorList>
            <person name="Welch R.A."/>
            <person name="Burland V."/>
            <person name="Plunkett G. III"/>
            <person name="Redford P."/>
            <person name="Roesch P."/>
            <person name="Rasko D."/>
            <person name="Buckles E.L."/>
            <person name="Liou S.-R."/>
            <person name="Boutin A."/>
            <person name="Hackett J."/>
            <person name="Stroud D."/>
            <person name="Mayhew G.F."/>
            <person name="Rose D.J."/>
            <person name="Zhou S."/>
            <person name="Schwartz D.C."/>
            <person name="Perna N.T."/>
            <person name="Mobley H.L.T."/>
            <person name="Donnenberg M.S."/>
            <person name="Blattner F.R."/>
        </authorList>
    </citation>
    <scope>NUCLEOTIDE SEQUENCE [LARGE SCALE GENOMIC DNA]</scope>
    <source>
        <strain>CFT073 / ATCC 700928 / UPEC</strain>
    </source>
</reference>
<organism>
    <name type="scientific">Escherichia coli O6:H1 (strain CFT073 / ATCC 700928 / UPEC)</name>
    <dbReference type="NCBI Taxonomy" id="199310"/>
    <lineage>
        <taxon>Bacteria</taxon>
        <taxon>Pseudomonadati</taxon>
        <taxon>Pseudomonadota</taxon>
        <taxon>Gammaproteobacteria</taxon>
        <taxon>Enterobacterales</taxon>
        <taxon>Enterobacteriaceae</taxon>
        <taxon>Escherichia</taxon>
    </lineage>
</organism>
<keyword id="KW-0028">Amino-acid biosynthesis</keyword>
<keyword id="KW-0220">Diaminopimelate biosynthesis</keyword>
<keyword id="KW-0457">Lysine biosynthesis</keyword>
<keyword id="KW-0486">Methionine biosynthesis</keyword>
<keyword id="KW-0521">NADP</keyword>
<keyword id="KW-0560">Oxidoreductase</keyword>
<keyword id="KW-1185">Reference proteome</keyword>
<keyword id="KW-0791">Threonine biosynthesis</keyword>
<name>DHAS_ECOL6</name>